<sequence length="163" mass="17576">MQHYVTPDLCDAYPDLVQVLEPMFSNFGGRDSFGGQIVTIKCFEDNSLVKEQVELDGKGKVLVVDGGGSLRRALLGDMLAEKAAKNGWEGLVIYGCVRDVDVLIQTDVGVQALASHPMKTDKRGIGDLNVVVAFAGVTFRPGEYVYADNNGVLVSPSPLEMPE</sequence>
<gene>
    <name type="ordered locus">PputGB1_1595</name>
</gene>
<proteinExistence type="inferred from homology"/>
<name>RRAAH_PSEPG</name>
<keyword id="KW-0456">Lyase</keyword>
<keyword id="KW-0479">Metal-binding</keyword>
<protein>
    <recommendedName>
        <fullName>Putative 4-hydroxy-4-methyl-2-oxoglutarate aldolase</fullName>
        <shortName>HMG aldolase</shortName>
        <ecNumber>4.1.3.17</ecNumber>
    </recommendedName>
    <alternativeName>
        <fullName>Oxaloacetate decarboxylase</fullName>
        <shortName>OAA decarboxylase</shortName>
        <ecNumber>4.1.1.112</ecNumber>
    </alternativeName>
    <alternativeName>
        <fullName>Regulator of ribonuclease activity homolog</fullName>
    </alternativeName>
    <alternativeName>
        <fullName>RraA-like protein</fullName>
    </alternativeName>
</protein>
<reference key="1">
    <citation type="submission" date="2008-01" db="EMBL/GenBank/DDBJ databases">
        <title>Complete sequence of Pseudomonas putida GB-1.</title>
        <authorList>
            <consortium name="US DOE Joint Genome Institute"/>
            <person name="Copeland A."/>
            <person name="Lucas S."/>
            <person name="Lapidus A."/>
            <person name="Barry K."/>
            <person name="Glavina del Rio T."/>
            <person name="Dalin E."/>
            <person name="Tice H."/>
            <person name="Pitluck S."/>
            <person name="Bruce D."/>
            <person name="Goodwin L."/>
            <person name="Chertkov O."/>
            <person name="Brettin T."/>
            <person name="Detter J.C."/>
            <person name="Han C."/>
            <person name="Kuske C.R."/>
            <person name="Schmutz J."/>
            <person name="Larimer F."/>
            <person name="Land M."/>
            <person name="Hauser L."/>
            <person name="Kyrpides N."/>
            <person name="Kim E."/>
            <person name="McCarthy J.K."/>
            <person name="Richardson P."/>
        </authorList>
    </citation>
    <scope>NUCLEOTIDE SEQUENCE [LARGE SCALE GENOMIC DNA]</scope>
    <source>
        <strain>GB-1</strain>
    </source>
</reference>
<dbReference type="EC" id="4.1.3.17"/>
<dbReference type="EC" id="4.1.1.112"/>
<dbReference type="EMBL" id="CP000926">
    <property type="protein sequence ID" value="ABY97500.1"/>
    <property type="molecule type" value="Genomic_DNA"/>
</dbReference>
<dbReference type="SMR" id="B0KG79"/>
<dbReference type="KEGG" id="ppg:PputGB1_1595"/>
<dbReference type="eggNOG" id="COG0684">
    <property type="taxonomic scope" value="Bacteria"/>
</dbReference>
<dbReference type="HOGENOM" id="CLU_072626_4_0_6"/>
<dbReference type="Proteomes" id="UP000002157">
    <property type="component" value="Chromosome"/>
</dbReference>
<dbReference type="GO" id="GO:0047443">
    <property type="term" value="F:4-hydroxy-4-methyl-2-oxoglutarate aldolase activity"/>
    <property type="evidence" value="ECO:0007669"/>
    <property type="project" value="UniProtKB-EC"/>
</dbReference>
<dbReference type="GO" id="GO:0046872">
    <property type="term" value="F:metal ion binding"/>
    <property type="evidence" value="ECO:0007669"/>
    <property type="project" value="UniProtKB-KW"/>
</dbReference>
<dbReference type="GO" id="GO:0008948">
    <property type="term" value="F:oxaloacetate decarboxylase activity"/>
    <property type="evidence" value="ECO:0007669"/>
    <property type="project" value="UniProtKB-EC"/>
</dbReference>
<dbReference type="GO" id="GO:0008428">
    <property type="term" value="F:ribonuclease inhibitor activity"/>
    <property type="evidence" value="ECO:0007669"/>
    <property type="project" value="InterPro"/>
</dbReference>
<dbReference type="GO" id="GO:0051252">
    <property type="term" value="P:regulation of RNA metabolic process"/>
    <property type="evidence" value="ECO:0007669"/>
    <property type="project" value="InterPro"/>
</dbReference>
<dbReference type="CDD" id="cd16841">
    <property type="entry name" value="RraA_family"/>
    <property type="match status" value="1"/>
</dbReference>
<dbReference type="Gene3D" id="3.50.30.40">
    <property type="entry name" value="Ribonuclease E inhibitor RraA/RraA-like"/>
    <property type="match status" value="1"/>
</dbReference>
<dbReference type="InterPro" id="IPR010203">
    <property type="entry name" value="RraA"/>
</dbReference>
<dbReference type="InterPro" id="IPR005493">
    <property type="entry name" value="RraA/RraA-like"/>
</dbReference>
<dbReference type="InterPro" id="IPR036704">
    <property type="entry name" value="RraA/RraA-like_sf"/>
</dbReference>
<dbReference type="NCBIfam" id="TIGR01935">
    <property type="entry name" value="NOT-MenG"/>
    <property type="match status" value="1"/>
</dbReference>
<dbReference type="NCBIfam" id="NF006875">
    <property type="entry name" value="PRK09372.1"/>
    <property type="match status" value="1"/>
</dbReference>
<dbReference type="NCBIfam" id="NF009134">
    <property type="entry name" value="PRK12487.1"/>
    <property type="match status" value="1"/>
</dbReference>
<dbReference type="PANTHER" id="PTHR33254">
    <property type="entry name" value="4-HYDROXY-4-METHYL-2-OXOGLUTARATE ALDOLASE 3-RELATED"/>
    <property type="match status" value="1"/>
</dbReference>
<dbReference type="PANTHER" id="PTHR33254:SF29">
    <property type="entry name" value="REGULATOR OF RIBONUCLEASE ACTIVITY A"/>
    <property type="match status" value="1"/>
</dbReference>
<dbReference type="Pfam" id="PF03737">
    <property type="entry name" value="RraA-like"/>
    <property type="match status" value="1"/>
</dbReference>
<dbReference type="SUPFAM" id="SSF89562">
    <property type="entry name" value="RraA-like"/>
    <property type="match status" value="1"/>
</dbReference>
<accession>B0KG79</accession>
<evidence type="ECO:0000250" key="1"/>
<evidence type="ECO:0000305" key="2"/>
<feature type="chain" id="PRO_1000081210" description="Putative 4-hydroxy-4-methyl-2-oxoglutarate aldolase">
    <location>
        <begin position="1"/>
        <end position="163"/>
    </location>
</feature>
<feature type="binding site" evidence="1">
    <location>
        <begin position="76"/>
        <end position="79"/>
    </location>
    <ligand>
        <name>substrate</name>
    </ligand>
</feature>
<feature type="binding site" evidence="1">
    <location>
        <position position="98"/>
    </location>
    <ligand>
        <name>substrate</name>
    </ligand>
</feature>
<feature type="binding site" evidence="1">
    <location>
        <position position="99"/>
    </location>
    <ligand>
        <name>a divalent metal cation</name>
        <dbReference type="ChEBI" id="CHEBI:60240"/>
    </ligand>
</feature>
<organism>
    <name type="scientific">Pseudomonas putida (strain GB-1)</name>
    <dbReference type="NCBI Taxonomy" id="76869"/>
    <lineage>
        <taxon>Bacteria</taxon>
        <taxon>Pseudomonadati</taxon>
        <taxon>Pseudomonadota</taxon>
        <taxon>Gammaproteobacteria</taxon>
        <taxon>Pseudomonadales</taxon>
        <taxon>Pseudomonadaceae</taxon>
        <taxon>Pseudomonas</taxon>
    </lineage>
</organism>
<comment type="function">
    <text evidence="1">Catalyzes the aldol cleavage of 4-hydroxy-4-methyl-2-oxoglutarate (HMG) into 2 molecules of pyruvate. Also contains a secondary oxaloacetate (OAA) decarboxylase activity due to the common pyruvate enolate transition state formed following C-C bond cleavage in the retro-aldol and decarboxylation reactions (By similarity).</text>
</comment>
<comment type="catalytic activity">
    <reaction>
        <text>4-hydroxy-4-methyl-2-oxoglutarate = 2 pyruvate</text>
        <dbReference type="Rhea" id="RHEA:22748"/>
        <dbReference type="ChEBI" id="CHEBI:15361"/>
        <dbReference type="ChEBI" id="CHEBI:58276"/>
        <dbReference type="EC" id="4.1.3.17"/>
    </reaction>
</comment>
<comment type="catalytic activity">
    <reaction>
        <text>oxaloacetate + H(+) = pyruvate + CO2</text>
        <dbReference type="Rhea" id="RHEA:15641"/>
        <dbReference type="ChEBI" id="CHEBI:15361"/>
        <dbReference type="ChEBI" id="CHEBI:15378"/>
        <dbReference type="ChEBI" id="CHEBI:16452"/>
        <dbReference type="ChEBI" id="CHEBI:16526"/>
        <dbReference type="EC" id="4.1.1.112"/>
    </reaction>
</comment>
<comment type="cofactor">
    <cofactor evidence="1">
        <name>a divalent metal cation</name>
        <dbReference type="ChEBI" id="CHEBI:60240"/>
    </cofactor>
    <text evidence="1">Divalent metal cation.</text>
</comment>
<comment type="subunit">
    <text evidence="1">Homotrimer.</text>
</comment>
<comment type="similarity">
    <text evidence="2">Belongs to the class II aldolase/RraA-like family.</text>
</comment>